<keyword id="KW-1003">Cell membrane</keyword>
<keyword id="KW-0297">G-protein coupled receptor</keyword>
<keyword id="KW-0325">Glycoprotein</keyword>
<keyword id="KW-0449">Lipoprotein</keyword>
<keyword id="KW-0472">Membrane</keyword>
<keyword id="KW-0564">Palmitate</keyword>
<keyword id="KW-0675">Receptor</keyword>
<keyword id="KW-0807">Transducer</keyword>
<keyword id="KW-0812">Transmembrane</keyword>
<keyword id="KW-1133">Transmembrane helix</keyword>
<sequence length="317" mass="34790">MAVQGFQRRLLGSLNSTPTAIPQLGLAANQTGARCLEVSIPDGLFLSLGLVSLVENVLVVATIAKNRNLHSPTYCFICCLALSDLLVSGGNVLETVVILLLEASALAARAAVVQPLDNVIDVITCSSMVSSLCFLGAIAVDRYVSIFYALRYHSIVTLPRARQAIAAIWVASVLFSTLFIAYYDHAAVLLCLVVFFLAMLVXMAVLYVHMLARACQHAQGIARLHKRQRPLHQGFGLKGAVTLTILLGIFFLCWGPFFLHLTLIVLCPQHPTCSCIFKNFNLFLTLIICNAIIDPLIYAFRRQELRRTLKEGLTCSW</sequence>
<gene>
    <name type="primary">MC1R</name>
</gene>
<proteinExistence type="inferred from homology"/>
<accession>Q864K7</accession>
<reference key="1">
    <citation type="journal article" date="2003" name="Am. J. Phys. Anthropol.">
        <title>Evolution of a pigmentation gene, the melanocortin-1 receptor, in primates.</title>
        <authorList>
            <person name="Mundy N.I."/>
            <person name="Kelly J."/>
        </authorList>
    </citation>
    <scope>NUCLEOTIDE SEQUENCE [GENOMIC DNA]</scope>
    <source>
        <strain>Isolate 1</strain>
    </source>
</reference>
<protein>
    <recommendedName>
        <fullName>Melanocyte-stimulating hormone receptor</fullName>
        <shortName>MSH-R</shortName>
    </recommendedName>
    <alternativeName>
        <fullName>Melanocortin receptor 1</fullName>
        <shortName>MC1-R</shortName>
    </alternativeName>
</protein>
<dbReference type="EMBL" id="AY205090">
    <property type="protein sequence ID" value="AAP30964.1"/>
    <property type="molecule type" value="Genomic_DNA"/>
</dbReference>
<dbReference type="GlyCosmos" id="Q864K7">
    <property type="glycosylation" value="1 site, No reported glycans"/>
</dbReference>
<dbReference type="GO" id="GO:0005886">
    <property type="term" value="C:plasma membrane"/>
    <property type="evidence" value="ECO:0000250"/>
    <property type="project" value="UniProtKB"/>
</dbReference>
<dbReference type="GO" id="GO:0004980">
    <property type="term" value="F:melanocyte-stimulating hormone receptor activity"/>
    <property type="evidence" value="ECO:0007669"/>
    <property type="project" value="InterPro"/>
</dbReference>
<dbReference type="GO" id="GO:0007189">
    <property type="term" value="P:adenylate cyclase-activating G protein-coupled receptor signaling pathway"/>
    <property type="evidence" value="ECO:0007669"/>
    <property type="project" value="UniProtKB-ARBA"/>
</dbReference>
<dbReference type="CDD" id="cd15351">
    <property type="entry name" value="7tmA_MC1R"/>
    <property type="match status" value="1"/>
</dbReference>
<dbReference type="FunFam" id="1.20.1070.10:FF:000211">
    <property type="entry name" value="Melanocyte-stimulating hormone receptor"/>
    <property type="match status" value="1"/>
</dbReference>
<dbReference type="Gene3D" id="1.20.1070.10">
    <property type="entry name" value="Rhodopsin 7-helix transmembrane proteins"/>
    <property type="match status" value="1"/>
</dbReference>
<dbReference type="InterPro" id="IPR000276">
    <property type="entry name" value="GPCR_Rhodpsn"/>
</dbReference>
<dbReference type="InterPro" id="IPR017452">
    <property type="entry name" value="GPCR_Rhodpsn_7TM"/>
</dbReference>
<dbReference type="InterPro" id="IPR001671">
    <property type="entry name" value="Melcrt_ACTH_rcpt"/>
</dbReference>
<dbReference type="InterPro" id="IPR000761">
    <property type="entry name" value="MSH_rcpt"/>
</dbReference>
<dbReference type="PANTHER" id="PTHR22750">
    <property type="entry name" value="G-PROTEIN COUPLED RECEPTOR"/>
    <property type="match status" value="1"/>
</dbReference>
<dbReference type="Pfam" id="PF00001">
    <property type="entry name" value="7tm_1"/>
    <property type="match status" value="1"/>
</dbReference>
<dbReference type="PRINTS" id="PR00237">
    <property type="entry name" value="GPCRRHODOPSN"/>
</dbReference>
<dbReference type="PRINTS" id="PR00534">
    <property type="entry name" value="MCRFAMILY"/>
</dbReference>
<dbReference type="PRINTS" id="PR00536">
    <property type="entry name" value="MELNOCYTESHR"/>
</dbReference>
<dbReference type="SMART" id="SM01381">
    <property type="entry name" value="7TM_GPCR_Srsx"/>
    <property type="match status" value="1"/>
</dbReference>
<dbReference type="SUPFAM" id="SSF81321">
    <property type="entry name" value="Family A G protein-coupled receptor-like"/>
    <property type="match status" value="1"/>
</dbReference>
<dbReference type="PROSITE" id="PS00237">
    <property type="entry name" value="G_PROTEIN_RECEP_F1_1"/>
    <property type="match status" value="1"/>
</dbReference>
<dbReference type="PROSITE" id="PS50262">
    <property type="entry name" value="G_PROTEIN_RECEP_F1_2"/>
    <property type="match status" value="1"/>
</dbReference>
<evidence type="ECO:0000250" key="1">
    <source>
        <dbReference type="UniProtKB" id="Q01726"/>
    </source>
</evidence>
<evidence type="ECO:0000255" key="2"/>
<evidence type="ECO:0000255" key="3">
    <source>
        <dbReference type="PROSITE-ProRule" id="PRU00521"/>
    </source>
</evidence>
<comment type="function">
    <text evidence="1">Receptor for MSH (alpha, beta and gamma) and ACTH. The activity of this receptor is mediated by G proteins which activate adenylate cyclase. Mediates melanogenesis, the production of eumelanin (black/brown) and phaeomelanin (red/yellow), via regulation of cAMP signaling in melanocytes.</text>
</comment>
<comment type="subunit">
    <text evidence="1">Interacts with MGRN1, but does not undergo MGRN1-mediated ubiquitination; this interaction competes with GNAS-binding and thus inhibits agonist-induced cAMP production. Interacts with OPN3; the interaction results in a decrease in MC1R-mediated cAMP signaling and ultimately a decrease in melanin production in melanocytes.</text>
</comment>
<comment type="subcellular location">
    <subcellularLocation>
        <location evidence="1">Cell membrane</location>
        <topology evidence="2">Multi-pass membrane protein</topology>
    </subcellularLocation>
</comment>
<comment type="similarity">
    <text evidence="3">Belongs to the G-protein coupled receptor 1 family.</text>
</comment>
<name>MSHR_HYLME</name>
<organism>
    <name type="scientific">Hylobates muelleri</name>
    <name type="common">Mueller's Bornean gibbon</name>
    <dbReference type="NCBI Taxonomy" id="9588"/>
    <lineage>
        <taxon>Eukaryota</taxon>
        <taxon>Metazoa</taxon>
        <taxon>Chordata</taxon>
        <taxon>Craniata</taxon>
        <taxon>Vertebrata</taxon>
        <taxon>Euteleostomi</taxon>
        <taxon>Mammalia</taxon>
        <taxon>Eutheria</taxon>
        <taxon>Euarchontoglires</taxon>
        <taxon>Primates</taxon>
        <taxon>Haplorrhini</taxon>
        <taxon>Catarrhini</taxon>
        <taxon>Hylobatidae</taxon>
        <taxon>Hylobates</taxon>
    </lineage>
</organism>
<feature type="chain" id="PRO_0000069821" description="Melanocyte-stimulating hormone receptor">
    <location>
        <begin position="1"/>
        <end position="317"/>
    </location>
</feature>
<feature type="topological domain" description="Extracellular" evidence="2">
    <location>
        <begin position="1"/>
        <end position="37"/>
    </location>
</feature>
<feature type="transmembrane region" description="Helical; Name=1" evidence="2">
    <location>
        <begin position="38"/>
        <end position="63"/>
    </location>
</feature>
<feature type="topological domain" description="Cytoplasmic" evidence="2">
    <location>
        <begin position="64"/>
        <end position="72"/>
    </location>
</feature>
<feature type="transmembrane region" description="Helical; Name=2" evidence="2">
    <location>
        <begin position="73"/>
        <end position="93"/>
    </location>
</feature>
<feature type="topological domain" description="Extracellular" evidence="2">
    <location>
        <begin position="94"/>
        <end position="118"/>
    </location>
</feature>
<feature type="transmembrane region" description="Helical; Name=3" evidence="2">
    <location>
        <begin position="119"/>
        <end position="140"/>
    </location>
</feature>
<feature type="topological domain" description="Cytoplasmic" evidence="2">
    <location>
        <begin position="141"/>
        <end position="163"/>
    </location>
</feature>
<feature type="transmembrane region" description="Helical; Name=4" evidence="2">
    <location>
        <begin position="164"/>
        <end position="183"/>
    </location>
</feature>
<feature type="topological domain" description="Extracellular" evidence="2">
    <location>
        <begin position="184"/>
        <end position="191"/>
    </location>
</feature>
<feature type="transmembrane region" description="Helical; Name=5" evidence="2">
    <location>
        <begin position="192"/>
        <end position="211"/>
    </location>
</feature>
<feature type="topological domain" description="Cytoplasmic" evidence="2">
    <location>
        <begin position="212"/>
        <end position="240"/>
    </location>
</feature>
<feature type="transmembrane region" description="Helical; Name=6" evidence="2">
    <location>
        <begin position="241"/>
        <end position="266"/>
    </location>
</feature>
<feature type="topological domain" description="Extracellular" evidence="2">
    <location>
        <begin position="267"/>
        <end position="279"/>
    </location>
</feature>
<feature type="transmembrane region" description="Helical; Name=7" evidence="2">
    <location>
        <begin position="280"/>
        <end position="300"/>
    </location>
</feature>
<feature type="topological domain" description="Cytoplasmic" evidence="2">
    <location>
        <begin position="301"/>
        <end position="317"/>
    </location>
</feature>
<feature type="lipid moiety-binding region" description="S-palmitoyl cysteine" evidence="2">
    <location>
        <position position="315"/>
    </location>
</feature>
<feature type="glycosylation site" description="N-linked (GlcNAc...) asparagine" evidence="2">
    <location>
        <position position="29"/>
    </location>
</feature>